<comment type="cofactor">
    <cofactor evidence="1">
        <name>Zn(2+)</name>
        <dbReference type="ChEBI" id="CHEBI:29105"/>
    </cofactor>
    <text evidence="1">Binds 2 Zn(2+) ions per subunit.</text>
</comment>
<comment type="similarity">
    <text evidence="2">Belongs to the peptidase M20B family.</text>
</comment>
<comment type="sequence caution" evidence="2">
    <conflict type="erroneous initiation">
        <sequence resource="EMBL-CDS" id="CAC49014"/>
    </conflict>
</comment>
<proteinExistence type="inferred from homology"/>
<dbReference type="EC" id="3.4.11.-"/>
<dbReference type="EMBL" id="AL591985">
    <property type="protein sequence ID" value="CAC49014.1"/>
    <property type="status" value="ALT_INIT"/>
    <property type="molecule type" value="Genomic_DNA"/>
</dbReference>
<dbReference type="PIR" id="F95918">
    <property type="entry name" value="F95918"/>
</dbReference>
<dbReference type="RefSeq" id="NP_437154.1">
    <property type="nucleotide sequence ID" value="NC_003078.1"/>
</dbReference>
<dbReference type="SMR" id="Q92VT5"/>
<dbReference type="EnsemblBacteria" id="CAC49014">
    <property type="protein sequence ID" value="CAC49014"/>
    <property type="gene ID" value="SM_b21042"/>
</dbReference>
<dbReference type="KEGG" id="sme:SM_b21042"/>
<dbReference type="PATRIC" id="fig|266834.11.peg.5544"/>
<dbReference type="eggNOG" id="COG2195">
    <property type="taxonomic scope" value="Bacteria"/>
</dbReference>
<dbReference type="HOGENOM" id="CLU_053676_0_0_5"/>
<dbReference type="OrthoDB" id="9804934at2"/>
<dbReference type="Proteomes" id="UP000001976">
    <property type="component" value="Plasmid pSymB"/>
</dbReference>
<dbReference type="GO" id="GO:0008237">
    <property type="term" value="F:metallopeptidase activity"/>
    <property type="evidence" value="ECO:0007669"/>
    <property type="project" value="UniProtKB-KW"/>
</dbReference>
<dbReference type="GO" id="GO:0045148">
    <property type="term" value="F:tripeptide aminopeptidase activity"/>
    <property type="evidence" value="ECO:0007669"/>
    <property type="project" value="InterPro"/>
</dbReference>
<dbReference type="GO" id="GO:0008270">
    <property type="term" value="F:zinc ion binding"/>
    <property type="evidence" value="ECO:0007669"/>
    <property type="project" value="InterPro"/>
</dbReference>
<dbReference type="GO" id="GO:0006518">
    <property type="term" value="P:peptide metabolic process"/>
    <property type="evidence" value="ECO:0007669"/>
    <property type="project" value="InterPro"/>
</dbReference>
<dbReference type="GO" id="GO:0006508">
    <property type="term" value="P:proteolysis"/>
    <property type="evidence" value="ECO:0007669"/>
    <property type="project" value="UniProtKB-KW"/>
</dbReference>
<dbReference type="CDD" id="cd03892">
    <property type="entry name" value="M20_peptT"/>
    <property type="match status" value="1"/>
</dbReference>
<dbReference type="Gene3D" id="3.30.70.360">
    <property type="match status" value="1"/>
</dbReference>
<dbReference type="Gene3D" id="3.40.630.10">
    <property type="entry name" value="Zn peptidases"/>
    <property type="match status" value="1"/>
</dbReference>
<dbReference type="InterPro" id="IPR001261">
    <property type="entry name" value="ArgE/DapE_CS"/>
</dbReference>
<dbReference type="InterPro" id="IPR036264">
    <property type="entry name" value="Bact_exopeptidase_dim_dom"/>
</dbReference>
<dbReference type="InterPro" id="IPR002933">
    <property type="entry name" value="Peptidase_M20"/>
</dbReference>
<dbReference type="InterPro" id="IPR011650">
    <property type="entry name" value="Peptidase_M20_dimer"/>
</dbReference>
<dbReference type="InterPro" id="IPR010161">
    <property type="entry name" value="Peptidase_M20B"/>
</dbReference>
<dbReference type="NCBIfam" id="TIGR01882">
    <property type="entry name" value="peptidase-T"/>
    <property type="match status" value="1"/>
</dbReference>
<dbReference type="NCBIfam" id="NF003976">
    <property type="entry name" value="PRK05469.1"/>
    <property type="match status" value="1"/>
</dbReference>
<dbReference type="NCBIfam" id="NF009920">
    <property type="entry name" value="PRK13381.1"/>
    <property type="match status" value="1"/>
</dbReference>
<dbReference type="PANTHER" id="PTHR42994">
    <property type="entry name" value="PEPTIDASE T"/>
    <property type="match status" value="1"/>
</dbReference>
<dbReference type="PANTHER" id="PTHR42994:SF1">
    <property type="entry name" value="PEPTIDASE T"/>
    <property type="match status" value="1"/>
</dbReference>
<dbReference type="Pfam" id="PF07687">
    <property type="entry name" value="M20_dimer"/>
    <property type="match status" value="1"/>
</dbReference>
<dbReference type="Pfam" id="PF01546">
    <property type="entry name" value="Peptidase_M20"/>
    <property type="match status" value="1"/>
</dbReference>
<dbReference type="PIRSF" id="PIRSF037215">
    <property type="entry name" value="Peptidase_M20B"/>
    <property type="match status" value="1"/>
</dbReference>
<dbReference type="SUPFAM" id="SSF55031">
    <property type="entry name" value="Bacterial exopeptidase dimerisation domain"/>
    <property type="match status" value="1"/>
</dbReference>
<dbReference type="SUPFAM" id="SSF53187">
    <property type="entry name" value="Zn-dependent exopeptidases"/>
    <property type="match status" value="1"/>
</dbReference>
<dbReference type="PROSITE" id="PS00758">
    <property type="entry name" value="ARGE_DAPE_CPG2_1"/>
    <property type="match status" value="1"/>
</dbReference>
<dbReference type="PROSITE" id="PS00759">
    <property type="entry name" value="ARGE_DAPE_CPG2_2"/>
    <property type="match status" value="1"/>
</dbReference>
<name>Y614_RHIME</name>
<feature type="chain" id="PRO_0000185336" description="Peptidase T-like protein RB0614">
    <location>
        <begin position="1"/>
        <end position="408"/>
    </location>
</feature>
<feature type="active site" evidence="1">
    <location>
        <position position="82"/>
    </location>
</feature>
<feature type="active site" description="Proton acceptor" evidence="1">
    <location>
        <position position="174"/>
    </location>
</feature>
<feature type="binding site" evidence="1">
    <location>
        <position position="80"/>
    </location>
    <ligand>
        <name>Zn(2+)</name>
        <dbReference type="ChEBI" id="CHEBI:29105"/>
        <label>1</label>
    </ligand>
</feature>
<feature type="binding site" evidence="1">
    <location>
        <position position="142"/>
    </location>
    <ligand>
        <name>Zn(2+)</name>
        <dbReference type="ChEBI" id="CHEBI:29105"/>
        <label>1</label>
    </ligand>
</feature>
<feature type="binding site" evidence="1">
    <location>
        <position position="142"/>
    </location>
    <ligand>
        <name>Zn(2+)</name>
        <dbReference type="ChEBI" id="CHEBI:29105"/>
        <label>2</label>
    </ligand>
</feature>
<feature type="binding site" evidence="1">
    <location>
        <position position="175"/>
    </location>
    <ligand>
        <name>Zn(2+)</name>
        <dbReference type="ChEBI" id="CHEBI:29105"/>
        <label>2</label>
    </ligand>
</feature>
<feature type="binding site" evidence="1">
    <location>
        <position position="198"/>
    </location>
    <ligand>
        <name>Zn(2+)</name>
        <dbReference type="ChEBI" id="CHEBI:29105"/>
        <label>1</label>
    </ligand>
</feature>
<feature type="binding site" evidence="1">
    <location>
        <position position="380"/>
    </location>
    <ligand>
        <name>Zn(2+)</name>
        <dbReference type="ChEBI" id="CHEBI:29105"/>
        <label>2</label>
    </ligand>
</feature>
<sequence length="408" mass="44872">MRVREELVSRFFRYAAIESQSNGRSQSLPSSPGQAALAALLADEMRAIGLEDVCIDAHAIVTGVKRGNRPAAPPIGFIAHLDTVDVGLSPFVRPQVLRFEGEDLCINRQEDIWLRVAEHPEILDWLGEDIIVGDGTSVLGADNKAAIAVIMTLLGRLDHEVGHGDVFVAFVPDEEIGMRGAKAMDVSRFPCDFAYTIDCCELGEVVLETFNAASCEIVFTGVSAHPMSAKGMLVNPLLMAMDFISHFDRKETPECTEGRDGFYWFKDLIANDSVASLTALIRDFDTDGFNRRKHRIAAVAEQMRSRYPTGNVRYQITDTYRNVSTSLARDERAVALLFKAMEELGIGKKVIAMRGGTDGAVLSAKGIPTPNFFTGAYNFHSRYEFLPVPAFERSLEVALKVCQLAATE</sequence>
<evidence type="ECO:0000250" key="1"/>
<evidence type="ECO:0000305" key="2"/>
<organism>
    <name type="scientific">Rhizobium meliloti (strain 1021)</name>
    <name type="common">Ensifer meliloti</name>
    <name type="synonym">Sinorhizobium meliloti</name>
    <dbReference type="NCBI Taxonomy" id="266834"/>
    <lineage>
        <taxon>Bacteria</taxon>
        <taxon>Pseudomonadati</taxon>
        <taxon>Pseudomonadota</taxon>
        <taxon>Alphaproteobacteria</taxon>
        <taxon>Hyphomicrobiales</taxon>
        <taxon>Rhizobiaceae</taxon>
        <taxon>Sinorhizobium/Ensifer group</taxon>
        <taxon>Sinorhizobium</taxon>
    </lineage>
</organism>
<gene>
    <name type="ordered locus">RB0614</name>
    <name type="ORF">SMb21042</name>
</gene>
<keyword id="KW-0378">Hydrolase</keyword>
<keyword id="KW-0479">Metal-binding</keyword>
<keyword id="KW-0482">Metalloprotease</keyword>
<keyword id="KW-0614">Plasmid</keyword>
<keyword id="KW-0645">Protease</keyword>
<keyword id="KW-1185">Reference proteome</keyword>
<keyword id="KW-0862">Zinc</keyword>
<reference key="1">
    <citation type="journal article" date="2001" name="Proc. Natl. Acad. Sci. U.S.A.">
        <title>The complete sequence of the 1,683-kb pSymB megaplasmid from the N2-fixing endosymbiont Sinorhizobium meliloti.</title>
        <authorList>
            <person name="Finan T.M."/>
            <person name="Weidner S."/>
            <person name="Wong K."/>
            <person name="Buhrmester J."/>
            <person name="Chain P."/>
            <person name="Vorhoelter F.J."/>
            <person name="Hernandez-Lucas I."/>
            <person name="Becker A."/>
            <person name="Cowie A."/>
            <person name="Gouzy J."/>
            <person name="Golding B."/>
            <person name="Puehler A."/>
        </authorList>
    </citation>
    <scope>NUCLEOTIDE SEQUENCE [LARGE SCALE GENOMIC DNA]</scope>
    <source>
        <strain>1021</strain>
    </source>
</reference>
<reference key="2">
    <citation type="journal article" date="2001" name="Science">
        <title>The composite genome of the legume symbiont Sinorhizobium meliloti.</title>
        <authorList>
            <person name="Galibert F."/>
            <person name="Finan T.M."/>
            <person name="Long S.R."/>
            <person name="Puehler A."/>
            <person name="Abola P."/>
            <person name="Ampe F."/>
            <person name="Barloy-Hubler F."/>
            <person name="Barnett M.J."/>
            <person name="Becker A."/>
            <person name="Boistard P."/>
            <person name="Bothe G."/>
            <person name="Boutry M."/>
            <person name="Bowser L."/>
            <person name="Buhrmester J."/>
            <person name="Cadieu E."/>
            <person name="Capela D."/>
            <person name="Chain P."/>
            <person name="Cowie A."/>
            <person name="Davis R.W."/>
            <person name="Dreano S."/>
            <person name="Federspiel N.A."/>
            <person name="Fisher R.F."/>
            <person name="Gloux S."/>
            <person name="Godrie T."/>
            <person name="Goffeau A."/>
            <person name="Golding B."/>
            <person name="Gouzy J."/>
            <person name="Gurjal M."/>
            <person name="Hernandez-Lucas I."/>
            <person name="Hong A."/>
            <person name="Huizar L."/>
            <person name="Hyman R.W."/>
            <person name="Jones T."/>
            <person name="Kahn D."/>
            <person name="Kahn M.L."/>
            <person name="Kalman S."/>
            <person name="Keating D.H."/>
            <person name="Kiss E."/>
            <person name="Komp C."/>
            <person name="Lelaure V."/>
            <person name="Masuy D."/>
            <person name="Palm C."/>
            <person name="Peck M.C."/>
            <person name="Pohl T.M."/>
            <person name="Portetelle D."/>
            <person name="Purnelle B."/>
            <person name="Ramsperger U."/>
            <person name="Surzycki R."/>
            <person name="Thebault P."/>
            <person name="Vandenbol M."/>
            <person name="Vorhoelter F.J."/>
            <person name="Weidner S."/>
            <person name="Wells D.H."/>
            <person name="Wong K."/>
            <person name="Yeh K.-C."/>
            <person name="Batut J."/>
        </authorList>
    </citation>
    <scope>NUCLEOTIDE SEQUENCE [LARGE SCALE GENOMIC DNA]</scope>
    <source>
        <strain>1021</strain>
    </source>
</reference>
<accession>Q92VT5</accession>
<protein>
    <recommendedName>
        <fullName>Peptidase T-like protein RB0614</fullName>
        <ecNumber>3.4.11.-</ecNumber>
    </recommendedName>
</protein>
<geneLocation type="plasmid">
    <name>pSymB</name>
    <name>megaplasmid 2</name>
</geneLocation>